<evidence type="ECO:0000250" key="1"/>
<evidence type="ECO:0000250" key="2">
    <source>
        <dbReference type="UniProtKB" id="P97784"/>
    </source>
</evidence>
<evidence type="ECO:0000250" key="3">
    <source>
        <dbReference type="UniProtKB" id="Q49AN0"/>
    </source>
</evidence>
<evidence type="ECO:0000250" key="4">
    <source>
        <dbReference type="UniProtKB" id="Q9R194"/>
    </source>
</evidence>
<evidence type="ECO:0000256" key="5">
    <source>
        <dbReference type="SAM" id="MobiDB-lite"/>
    </source>
</evidence>
<evidence type="ECO:0000269" key="6">
    <source>
    </source>
</evidence>
<evidence type="ECO:0000269" key="7">
    <source>
    </source>
</evidence>
<evidence type="ECO:0000305" key="8"/>
<feature type="chain" id="PRO_0000261150" description="Cryptochrome-2">
    <location>
        <begin position="1"/>
        <end position="594"/>
    </location>
</feature>
<feature type="domain" description="Photolyase/cryptochrome alpha/beta">
    <location>
        <begin position="21"/>
        <end position="150"/>
    </location>
</feature>
<feature type="region of interest" description="Required for inhibition of CLOCK-BMAL1-mediated transcription" evidence="4">
    <location>
        <begin position="389"/>
        <end position="488"/>
    </location>
</feature>
<feature type="region of interest" description="Disordered" evidence="5">
    <location>
        <begin position="532"/>
        <end position="594"/>
    </location>
</feature>
<feature type="compositionally biased region" description="Polar residues" evidence="5">
    <location>
        <begin position="536"/>
        <end position="547"/>
    </location>
</feature>
<feature type="binding site" evidence="4">
    <location>
        <position position="270"/>
    </location>
    <ligand>
        <name>FAD</name>
        <dbReference type="ChEBI" id="CHEBI:57692"/>
    </ligand>
</feature>
<feature type="binding site" evidence="2">
    <location>
        <position position="307"/>
    </location>
    <ligand>
        <name>FAD</name>
        <dbReference type="ChEBI" id="CHEBI:57692"/>
    </ligand>
</feature>
<feature type="binding site" evidence="4">
    <location>
        <position position="373"/>
    </location>
    <ligand>
        <name>FAD</name>
        <dbReference type="ChEBI" id="CHEBI:57692"/>
    </ligand>
</feature>
<feature type="binding site" evidence="4">
    <location>
        <begin position="405"/>
        <end position="407"/>
    </location>
    <ligand>
        <name>FAD</name>
        <dbReference type="ChEBI" id="CHEBI:57692"/>
    </ligand>
</feature>
<feature type="modified residue" description="Phosphoserine" evidence="2">
    <location>
        <position position="89"/>
    </location>
</feature>
<feature type="modified residue" description="Phosphoserine; by MAPK" evidence="4">
    <location>
        <position position="265"/>
    </location>
</feature>
<feature type="modified residue" description="Phosphoserine" evidence="2">
    <location>
        <position position="298"/>
    </location>
</feature>
<feature type="modified residue" description="Phosphoserine; by GSK3-beta" evidence="4">
    <location>
        <position position="553"/>
    </location>
</feature>
<feature type="modified residue" description="Phosphoserine; by DYRK1A and MAPK" evidence="4">
    <location>
        <position position="557"/>
    </location>
</feature>
<feature type="cross-link" description="Glycyl lysine isopeptide (Lys-Gly) (interchain with G-Cter in ubiquitin)" evidence="2">
    <location>
        <position position="29"/>
    </location>
</feature>
<feature type="cross-link" description="Glycyl lysine isopeptide (Lys-Gly) (interchain with G-Cter in ubiquitin)" evidence="4">
    <location>
        <position position="125"/>
    </location>
</feature>
<feature type="cross-link" description="Glycyl lysine isopeptide (Lys-Gly) (interchain with G-Cter in ubiquitin)" evidence="4">
    <location>
        <position position="241"/>
    </location>
</feature>
<feature type="cross-link" description="Glycyl lysine isopeptide (Lys-Gly) (interchain with G-Cter in ubiquitin)" evidence="4">
    <location>
        <position position="347"/>
    </location>
</feature>
<feature type="cross-link" description="Glycyl lysine isopeptide (Lys-Gly) (interchain with G-Cter in ubiquitin)" evidence="4">
    <location>
        <position position="474"/>
    </location>
</feature>
<feature type="cross-link" description="Glycyl lysine isopeptide (Lys-Gly) (interchain with G-Cter in ubiquitin)" evidence="4">
    <location>
        <position position="503"/>
    </location>
</feature>
<organism>
    <name type="scientific">Rattus norvegicus</name>
    <name type="common">Rat</name>
    <dbReference type="NCBI Taxonomy" id="10116"/>
    <lineage>
        <taxon>Eukaryota</taxon>
        <taxon>Metazoa</taxon>
        <taxon>Chordata</taxon>
        <taxon>Craniata</taxon>
        <taxon>Vertebrata</taxon>
        <taxon>Euteleostomi</taxon>
        <taxon>Mammalia</taxon>
        <taxon>Eutheria</taxon>
        <taxon>Euarchontoglires</taxon>
        <taxon>Glires</taxon>
        <taxon>Rodentia</taxon>
        <taxon>Myomorpha</taxon>
        <taxon>Muroidea</taxon>
        <taxon>Muridae</taxon>
        <taxon>Murinae</taxon>
        <taxon>Rattus</taxon>
    </lineage>
</organism>
<proteinExistence type="evidence at protein level"/>
<sequence>MAAAAVVAATVPVQSMGADGASSVHWFRKGLRLHDNPALLAAVRGARCVRCVYILDPWFAASSSVGINRWRFLLQSLEDLDTSLRKLNSRLFVVRGQPADVFPRLFKEWGVTRLTFEYDSEPFGKERDAAIMKMAKEAGVEVVTENSHTLYDLDRIIELNGQKPPLTYKRFQALISRMELPKKPVGAVSSQHMENCRAEIQENHDDTYGVPSLEELGFPTEGLGPAVWQGGETEALVRLDKHLERKAWVANYERPRMNANSLLASPTGLSPYLRFGCLSCRLFYYRLWDLYRKVKRNSTPPLSLFGQLLWREFFYTAATNNPRFDRMEGNPICIQIPWDRNPEALAKWAEGKTGFPWIDAIMTQLRQEGWIHHLARHAVACFLTRGDLWVSWESGVRVFDELLLDADFSVNAGSWMWLSCSAFFQQFFHCYCPVGFGRRTDPSGDYIRRYLPKLKGFPSRYIYEPWNAPESVQKAANCIIGVDYPRPIVNHAETSRLNIERMKQIYQQLSRYRGLCLWASVPSCVEDLSHPVAEPGSSQAGSISNTGPRPLSSGPASPKRKLEAAEEPPGEELSKRARVTVTQMPAQEPPSKDS</sequence>
<reference key="1">
    <citation type="journal article" date="2001" name="Mol. Cells">
        <title>Cloning and expression of cryptochrome2 cDNA in the rat.</title>
        <authorList>
            <person name="Eun B.-K."/>
            <person name="Lee B.J."/>
            <person name="Kang H.M."/>
        </authorList>
    </citation>
    <scope>NUCLEOTIDE SEQUENCE [MRNA]</scope>
    <scope>TISSUE SPECIFICITY</scope>
    <source>
        <strain>Sprague-Dawley</strain>
        <tissue>Brain</tissue>
    </source>
</reference>
<reference key="2">
    <citation type="journal article" date="2006" name="Proc. Natl. Acad. Sci. U.S.A.">
        <title>Posttranslational regulation of the mammalian circadian clock by cryptochrome and protein phosphatase 5.</title>
        <authorList>
            <person name="Partch C.L."/>
            <person name="Shields K.F."/>
            <person name="Thompson C.L."/>
            <person name="Selby C.P."/>
            <person name="Sancar A."/>
        </authorList>
    </citation>
    <scope>INTERACTION WITH PPP5C</scope>
</reference>
<gene>
    <name type="primary">Cry2</name>
</gene>
<name>CRY2_RAT</name>
<keyword id="KW-0090">Biological rhythms</keyword>
<keyword id="KW-0157">Chromophore</keyword>
<keyword id="KW-0963">Cytoplasm</keyword>
<keyword id="KW-0274">FAD</keyword>
<keyword id="KW-0285">Flavoprotein</keyword>
<keyword id="KW-1017">Isopeptide bond</keyword>
<keyword id="KW-0547">Nucleotide-binding</keyword>
<keyword id="KW-0539">Nucleus</keyword>
<keyword id="KW-0597">Phosphoprotein</keyword>
<keyword id="KW-0600">Photoreceptor protein</keyword>
<keyword id="KW-0675">Receptor</keyword>
<keyword id="KW-1185">Reference proteome</keyword>
<keyword id="KW-0678">Repressor</keyword>
<keyword id="KW-0716">Sensory transduction</keyword>
<keyword id="KW-0804">Transcription</keyword>
<keyword id="KW-0805">Transcription regulation</keyword>
<keyword id="KW-0832">Ubl conjugation</keyword>
<comment type="function">
    <text evidence="4">Transcriptional repressor which forms a core component of the circadian clock. The circadian clock, an internal time-keeping system, regulates various physiological processes through the generation of approximately 24 hour circadian rhythms in gene expression, which are translated into rhythms in metabolism and behavior. It is derived from the Latin roots 'circa' (about) and 'diem' (day) and acts as an important regulator of a wide array of physiological functions including metabolism, sleep, body temperature, blood pressure, endocrine, immune, cardiovascular, and renal function. Consists of two major components: the central clock, residing in the suprachiasmatic nucleus (SCN) of the brain, and the peripheral clocks that are present in nearly every tissue and organ system. Both the central and peripheral clocks can be reset by environmental cues, also known as Zeitgebers (German for 'timegivers'). The predominant Zeitgeber for the central clock is light, which is sensed by retina and signals directly to the SCN. The central clock entrains the peripheral clocks through neuronal and hormonal signals, body temperature and feeding-related cues, aligning all clocks with the external light/dark cycle. Circadian rhythms allow an organism to achieve temporal homeostasis with its environment at the molecular level by regulating gene expression to create a peak of protein expression once every 24 hours to control when a particular physiological process is most active with respect to the solar day. Transcription and translation of core clock components (CLOCK, NPAS2, BMAL1, BMAL2, PER1, PER2, PER3, CRY1 and CRY2) plays a critical role in rhythm generation, whereas delays imposed by post-translational modifications (PTMs) are important for determining the period (tau) of the rhythms (tau refers to the period of a rhythm and is the length, in time, of one complete cycle). A diurnal rhythm is synchronized with the day/night cycle, while the ultradian and infradian rhythms have a period shorter and longer than 24 hours, respectively. Disruptions in the circadian rhythms contribute to the pathology of cardiovascular diseases, cancer, metabolic syndromes and aging. A transcription/translation feedback loop (TTFL) forms the core of the molecular circadian clock mechanism. Transcription factors, CLOCK or NPAS2 and BMAL1 or BMAL2, form the positive limb of the feedback loop, act in the form of a heterodimer and activate the transcription of core clock genes and clock-controlled genes (involved in key metabolic processes), harboring E-box elements (5'-CACGTG-3') within their promoters. The core clock genes: PER1/2/3 and CRY1/2 which are transcriptional repressors form the negative limb of the feedback loop and interact with the CLOCK|NPAS2-BMAL1|BMAL2 heterodimer inhibiting its activity and thereby negatively regulating their own expression. This heterodimer also activates nuclear receptors NR1D1/2 and RORA/B/G, which form a second feedback loop and which activate and repress BMAL1 transcription, respectively. CRY1 and CRY2 have redundant functions but also differential and selective contributions at least in defining the pace of the SCN circadian clock and its circadian transcriptional outputs. Less potent transcriptional repressor in cerebellum and liver than CRY1, though less effective in lengthening the period of the SCN oscillator. Seems to play a critical role in tuning SCN circadian period by opposing the action of CRY1. With CRY1, dispensable for circadian rhythm generation but necessary for the development of intercellular networks for rhythm synchrony. May mediate circadian regulation of cAMP signaling and gluconeogenesis by blocking glucagon-mediated increases in intracellular cAMP concentrations and in CREB1 phosphorylation. Besides its role in the maintenance of the circadian clock, is also involved in the regulation of other processes. Plays a key role in glucose and lipid metabolism modulation, in part, through the transcriptional regulation of genes involved in these pathways, such as LEP or ACSL4. Represses glucocorticoid receptor NR3C1/GR-induced transcriptional activity by binding to glucocorticoid response elements (GREs). Represses the CLOCK-BMAL1 induced transcription of BHLHE40/DEC1 and NAMPT (By similarity). Represses PPARD and its target genes in the skeletal muscle and limits exercise capacity (By similarity). Represses the transcriptional activity of NR1I2 (By similarity).</text>
</comment>
<comment type="cofactor">
    <cofactor evidence="4">
        <name>FAD</name>
        <dbReference type="ChEBI" id="CHEBI:57692"/>
    </cofactor>
    <text evidence="4">Binds 1 FAD per subunit. Only a minority of the protein molecules contain bound FAD. Contrary to the situation in photolyases, the FAD is bound in a shallow, surface-exposed pocket.</text>
</comment>
<comment type="cofactor">
    <cofactor evidence="1">
        <name>(6R)-5,10-methylene-5,6,7,8-tetrahydrofolate</name>
        <dbReference type="ChEBI" id="CHEBI:15636"/>
    </cofactor>
    <text evidence="1">Binds 1 5,10-methenyltetrahydrofolate (MTHF) non-covalently per subunit.</text>
</comment>
<comment type="subunit">
    <text evidence="3 4 7">Component of the circadian core oscillator, which includes the CRY proteins, CLOCK or NPAS2, BMAL1 or BMAL2, CSNK1D and/or CSNK1E, TIMELESS, and the PER proteins (By similarity). Interacts with TIMELESS (By similarity). Interacts directly with PER1, PER2 and PER3; interaction with PER2 inhibits its ubiquitination and vice versa (By similarity). Interacts with CLOCK-BMAL1 (By similarity). Interacts with CLOCK (By similarity). Interacts with BMAL1 (By similarity). Interacts with NFIL3 (By similarity). Interacts with FBXL3 and FBXL21 (By similarity). FBXL3, PER2 and the cofactor FAD compete for overlapping binding sites (By similarity). FBXL3 cannot bind CRY2 that interacts already with PER2 or that contains bound FAD (By similarity). Interacts with PPP5C (via TPR repeats); the interaction down-regulates the PPP5C phosphatase activity on CSNK1E (PubMed:16790549). Interacts with nuclear receptors AR and NR3C1/GR; the interaction is ligand dependent (By similarity). Interacts with PRKDC and CIART (By similarity). Interacts with DDB1, USP7 and TARDBP (By similarity). Interacts with HNF4A and PPARA (By similarity). Interacts with PPARD (via domain NR LBD) and NR1I2 (via domain NR LBD) in a ligand-dependent manner (By similarity). Interacts with PPARG, NR1I3 and VDR in a ligand-dependent manner (By similarity).</text>
</comment>
<comment type="subcellular location">
    <subcellularLocation>
        <location evidence="4">Cytoplasm</location>
    </subcellularLocation>
    <subcellularLocation>
        <location evidence="4">Nucleus</location>
    </subcellularLocation>
    <text evidence="4">Translocated to the nucleus through interaction with other Clock proteins such as PER2 or BMAL1.</text>
</comment>
<comment type="tissue specificity">
    <text evidence="6">Expressed in all tissues examined including heart, cerebellum, cerebral cortex, lung, liver, muscle, kidney and ovary. Highest levels in heart, liver and ovary. Highly expressed in the suprachiasmatic nucleus (SCN).</text>
</comment>
<comment type="PTM">
    <text evidence="4">Phosphorylation on Ser-265 by MAPK is important for the inhibition of CLOCK-BMAL1-mediated transcriptional activity. Phosphorylation by CSKNe requires interaction with PER1 or PER2. Phosphorylated in a circadian manner at Ser-553 and Ser-557 in the suprachiasmatic nucleus (SCN) and liver. Phosphorylation at Ser-557 by DYRK1A promotes subsequent phosphorylation at Ser-553 by GSK3-beta: the two-step phosphorylation at the neighboring Ser residues leads to its proteasomal degradation.</text>
</comment>
<comment type="PTM">
    <text evidence="4">Ubiquitinated by the SCF(FBXL3) and SCF(FBXL21) complexes, regulating the balance between degradation and stabilization (By similarity). The SCF(FBXL3) complex is mainly nuclear and mediates ubiquitination and subsequent degradation of CRY2 (By similarity). In contrast, cytoplasmic SCF(FBXL21) complex-mediated ubiquitination leads to stabilize CRY2 and counteract the activity of the SCF(FBXL3) complex (By similarity). The SCF(FBXL3) and SCF(FBXL21) complexes probably mediate ubiquitination at different Lys residues (By similarity). The SCF(FBXL3) complex recognizes and binds CRY2 phosphorylated at Ser-553 and Ser-557 (By similarity). Ubiquitination may be inhibited by PER2 (By similarity). Deubiquitinated by USP7 (By similarity).</text>
</comment>
<comment type="similarity">
    <text evidence="8">Belongs to the DNA photolyase class-1 family.</text>
</comment>
<protein>
    <recommendedName>
        <fullName>Cryptochrome-2</fullName>
    </recommendedName>
</protein>
<dbReference type="EMBL" id="AY033877">
    <property type="protein sequence ID" value="AAK61419.1"/>
    <property type="molecule type" value="mRNA"/>
</dbReference>
<dbReference type="SMR" id="Q923I8"/>
<dbReference type="CORUM" id="Q923I8"/>
<dbReference type="DIP" id="DIP-61214N"/>
<dbReference type="FunCoup" id="Q923I8">
    <property type="interactions" value="320"/>
</dbReference>
<dbReference type="IntAct" id="Q923I8">
    <property type="interactions" value="1"/>
</dbReference>
<dbReference type="STRING" id="10116.ENSRNOP00000010142"/>
<dbReference type="PhosphoSitePlus" id="Q923I8"/>
<dbReference type="PaxDb" id="10116-ENSRNOP00000010142"/>
<dbReference type="UCSC" id="RGD:620935">
    <property type="organism name" value="rat"/>
</dbReference>
<dbReference type="AGR" id="RGD:620935"/>
<dbReference type="RGD" id="620935">
    <property type="gene designation" value="Cry2"/>
</dbReference>
<dbReference type="eggNOG" id="KOG0133">
    <property type="taxonomic scope" value="Eukaryota"/>
</dbReference>
<dbReference type="InParanoid" id="Q923I8"/>
<dbReference type="PhylomeDB" id="Q923I8"/>
<dbReference type="PRO" id="PR:Q923I8"/>
<dbReference type="Proteomes" id="UP000002494">
    <property type="component" value="Unplaced"/>
</dbReference>
<dbReference type="GO" id="GO:1990512">
    <property type="term" value="C:Cry-Per complex"/>
    <property type="evidence" value="ECO:0000266"/>
    <property type="project" value="RGD"/>
</dbReference>
<dbReference type="GO" id="GO:0005737">
    <property type="term" value="C:cytoplasm"/>
    <property type="evidence" value="ECO:0000318"/>
    <property type="project" value="GO_Central"/>
</dbReference>
<dbReference type="GO" id="GO:0005576">
    <property type="term" value="C:extracellular region"/>
    <property type="evidence" value="ECO:0000266"/>
    <property type="project" value="RGD"/>
</dbReference>
<dbReference type="GO" id="GO:0005739">
    <property type="term" value="C:mitochondrion"/>
    <property type="evidence" value="ECO:0000266"/>
    <property type="project" value="RGD"/>
</dbReference>
<dbReference type="GO" id="GO:0005634">
    <property type="term" value="C:nucleus"/>
    <property type="evidence" value="ECO:0000250"/>
    <property type="project" value="UniProtKB"/>
</dbReference>
<dbReference type="GO" id="GO:0003684">
    <property type="term" value="F:damaged DNA binding"/>
    <property type="evidence" value="ECO:0000266"/>
    <property type="project" value="RGD"/>
</dbReference>
<dbReference type="GO" id="GO:0003677">
    <property type="term" value="F:DNA binding"/>
    <property type="evidence" value="ECO:0000266"/>
    <property type="project" value="RGD"/>
</dbReference>
<dbReference type="GO" id="GO:0071949">
    <property type="term" value="F:FAD binding"/>
    <property type="evidence" value="ECO:0000250"/>
    <property type="project" value="UniProtKB"/>
</dbReference>
<dbReference type="GO" id="GO:0019900">
    <property type="term" value="F:kinase binding"/>
    <property type="evidence" value="ECO:0000266"/>
    <property type="project" value="RGD"/>
</dbReference>
<dbReference type="GO" id="GO:0016922">
    <property type="term" value="F:nuclear receptor binding"/>
    <property type="evidence" value="ECO:0000266"/>
    <property type="project" value="RGD"/>
</dbReference>
<dbReference type="GO" id="GO:0019902">
    <property type="term" value="F:phosphatase binding"/>
    <property type="evidence" value="ECO:0000266"/>
    <property type="project" value="RGD"/>
</dbReference>
<dbReference type="GO" id="GO:0009881">
    <property type="term" value="F:photoreceptor activity"/>
    <property type="evidence" value="ECO:0007669"/>
    <property type="project" value="UniProtKB-KW"/>
</dbReference>
<dbReference type="GO" id="GO:0019901">
    <property type="term" value="F:protein kinase binding"/>
    <property type="evidence" value="ECO:0000266"/>
    <property type="project" value="RGD"/>
</dbReference>
<dbReference type="GO" id="GO:0004864">
    <property type="term" value="F:protein phosphatase inhibitor activity"/>
    <property type="evidence" value="ECO:0000266"/>
    <property type="project" value="RGD"/>
</dbReference>
<dbReference type="GO" id="GO:0003697">
    <property type="term" value="F:single-stranded DNA binding"/>
    <property type="evidence" value="ECO:0000266"/>
    <property type="project" value="RGD"/>
</dbReference>
<dbReference type="GO" id="GO:0000976">
    <property type="term" value="F:transcription cis-regulatory region binding"/>
    <property type="evidence" value="ECO:0000250"/>
    <property type="project" value="UniProtKB"/>
</dbReference>
<dbReference type="GO" id="GO:0032922">
    <property type="term" value="P:circadian regulation of gene expression"/>
    <property type="evidence" value="ECO:0000250"/>
    <property type="project" value="UniProtKB"/>
</dbReference>
<dbReference type="GO" id="GO:0007623">
    <property type="term" value="P:circadian rhythm"/>
    <property type="evidence" value="ECO:0000270"/>
    <property type="project" value="RGD"/>
</dbReference>
<dbReference type="GO" id="GO:0043153">
    <property type="term" value="P:entrainment of circadian clock by photoperiod"/>
    <property type="evidence" value="ECO:0000250"/>
    <property type="project" value="UniProtKB"/>
</dbReference>
<dbReference type="GO" id="GO:0042593">
    <property type="term" value="P:glucose homeostasis"/>
    <property type="evidence" value="ECO:0000250"/>
    <property type="project" value="UniProtKB"/>
</dbReference>
<dbReference type="GO" id="GO:0019915">
    <property type="term" value="P:lipid storage"/>
    <property type="evidence" value="ECO:0000266"/>
    <property type="project" value="RGD"/>
</dbReference>
<dbReference type="GO" id="GO:0042754">
    <property type="term" value="P:negative regulation of circadian rhythm"/>
    <property type="evidence" value="ECO:0000250"/>
    <property type="project" value="UniProtKB"/>
</dbReference>
<dbReference type="GO" id="GO:0045892">
    <property type="term" value="P:negative regulation of DNA-templated transcription"/>
    <property type="evidence" value="ECO:0000250"/>
    <property type="project" value="UniProtKB"/>
</dbReference>
<dbReference type="GO" id="GO:2000850">
    <property type="term" value="P:negative regulation of glucocorticoid secretion"/>
    <property type="evidence" value="ECO:0000266"/>
    <property type="project" value="RGD"/>
</dbReference>
<dbReference type="GO" id="GO:2000323">
    <property type="term" value="P:negative regulation of nuclear receptor-mediated glucocorticoid signaling pathway"/>
    <property type="evidence" value="ECO:0000250"/>
    <property type="project" value="UniProtKB"/>
</dbReference>
<dbReference type="GO" id="GO:0000122">
    <property type="term" value="P:negative regulation of transcription by RNA polymerase II"/>
    <property type="evidence" value="ECO:0000266"/>
    <property type="project" value="RGD"/>
</dbReference>
<dbReference type="GO" id="GO:0006606">
    <property type="term" value="P:protein import into nucleus"/>
    <property type="evidence" value="ECO:0000266"/>
    <property type="project" value="RGD"/>
</dbReference>
<dbReference type="GO" id="GO:0042752">
    <property type="term" value="P:regulation of circadian rhythm"/>
    <property type="evidence" value="ECO:0000250"/>
    <property type="project" value="UniProtKB"/>
</dbReference>
<dbReference type="GO" id="GO:2000118">
    <property type="term" value="P:regulation of sodium-dependent phosphate transport"/>
    <property type="evidence" value="ECO:0000266"/>
    <property type="project" value="RGD"/>
</dbReference>
<dbReference type="GO" id="GO:0014823">
    <property type="term" value="P:response to activity"/>
    <property type="evidence" value="ECO:0000250"/>
    <property type="project" value="UniProtKB"/>
</dbReference>
<dbReference type="GO" id="GO:0032868">
    <property type="term" value="P:response to insulin"/>
    <property type="evidence" value="ECO:0000266"/>
    <property type="project" value="RGD"/>
</dbReference>
<dbReference type="GO" id="GO:0009416">
    <property type="term" value="P:response to light stimulus"/>
    <property type="evidence" value="ECO:0000250"/>
    <property type="project" value="UniProtKB"/>
</dbReference>
<dbReference type="FunFam" id="1.10.579.10:FF:000001">
    <property type="entry name" value="Cryptochrome 1"/>
    <property type="match status" value="1"/>
</dbReference>
<dbReference type="FunFam" id="1.25.40.80:FF:000001">
    <property type="entry name" value="Cryptochrome circadian regulator 2"/>
    <property type="match status" value="1"/>
</dbReference>
<dbReference type="FunFam" id="1.25.40.80:FF:000003">
    <property type="entry name" value="cryptochrome-1 isoform X1"/>
    <property type="match status" value="1"/>
</dbReference>
<dbReference type="Gene3D" id="1.25.40.80">
    <property type="match status" value="1"/>
</dbReference>
<dbReference type="Gene3D" id="1.10.579.10">
    <property type="entry name" value="DNA Cyclobutane Dipyrimidine Photolyase, subunit A, domain 3"/>
    <property type="match status" value="1"/>
</dbReference>
<dbReference type="Gene3D" id="3.40.50.620">
    <property type="entry name" value="HUPs"/>
    <property type="match status" value="1"/>
</dbReference>
<dbReference type="InterPro" id="IPR036134">
    <property type="entry name" value="Crypto/Photolyase_FAD-like_sf"/>
</dbReference>
<dbReference type="InterPro" id="IPR036155">
    <property type="entry name" value="Crypto/Photolyase_N_sf"/>
</dbReference>
<dbReference type="InterPro" id="IPR005101">
    <property type="entry name" value="Cryptochr/Photolyase_FAD-bd"/>
</dbReference>
<dbReference type="InterPro" id="IPR002081">
    <property type="entry name" value="Cryptochrome/DNA_photolyase_1"/>
</dbReference>
<dbReference type="InterPro" id="IPR006050">
    <property type="entry name" value="DNA_photolyase_N"/>
</dbReference>
<dbReference type="InterPro" id="IPR014729">
    <property type="entry name" value="Rossmann-like_a/b/a_fold"/>
</dbReference>
<dbReference type="PANTHER" id="PTHR11455">
    <property type="entry name" value="CRYPTOCHROME"/>
    <property type="match status" value="1"/>
</dbReference>
<dbReference type="PANTHER" id="PTHR11455:SF15">
    <property type="entry name" value="CRYPTOCHROME-2"/>
    <property type="match status" value="1"/>
</dbReference>
<dbReference type="Pfam" id="PF00875">
    <property type="entry name" value="DNA_photolyase"/>
    <property type="match status" value="1"/>
</dbReference>
<dbReference type="Pfam" id="PF03441">
    <property type="entry name" value="FAD_binding_7"/>
    <property type="match status" value="1"/>
</dbReference>
<dbReference type="SUPFAM" id="SSF48173">
    <property type="entry name" value="Cryptochrome/photolyase FAD-binding domain"/>
    <property type="match status" value="1"/>
</dbReference>
<dbReference type="SUPFAM" id="SSF52425">
    <property type="entry name" value="Cryptochrome/photolyase, N-terminal domain"/>
    <property type="match status" value="1"/>
</dbReference>
<dbReference type="PROSITE" id="PS51645">
    <property type="entry name" value="PHR_CRY_ALPHA_BETA"/>
    <property type="match status" value="1"/>
</dbReference>
<accession>Q923I8</accession>